<accession>Q5A960</accession>
<accession>A0A1D8PS43</accession>
<protein>
    <recommendedName>
        <fullName>Histone deacetylase HDA1</fullName>
        <ecNumber>3.5.1.98</ecNumber>
    </recommendedName>
</protein>
<keyword id="KW-0156">Chromatin regulator</keyword>
<keyword id="KW-0175">Coiled coil</keyword>
<keyword id="KW-0378">Hydrolase</keyword>
<keyword id="KW-0539">Nucleus</keyword>
<keyword id="KW-1185">Reference proteome</keyword>
<keyword id="KW-0678">Repressor</keyword>
<keyword id="KW-0804">Transcription</keyword>
<keyword id="KW-0805">Transcription regulation</keyword>
<keyword id="KW-0843">Virulence</keyword>
<gene>
    <name type="primary">HDA1</name>
    <name type="ordered locus">CAALFM_CR02050CA</name>
    <name type="ORF">CaO19.10137</name>
    <name type="ORF">CaO19.2606</name>
</gene>
<organism>
    <name type="scientific">Candida albicans (strain SC5314 / ATCC MYA-2876)</name>
    <name type="common">Yeast</name>
    <dbReference type="NCBI Taxonomy" id="237561"/>
    <lineage>
        <taxon>Eukaryota</taxon>
        <taxon>Fungi</taxon>
        <taxon>Dikarya</taxon>
        <taxon>Ascomycota</taxon>
        <taxon>Saccharomycotina</taxon>
        <taxon>Pichiomycetes</taxon>
        <taxon>Debaryomycetaceae</taxon>
        <taxon>Candida/Lodderomyces clade</taxon>
        <taxon>Candida</taxon>
    </lineage>
</organism>
<feature type="chain" id="PRO_0000422800" description="Histone deacetylase HDA1">
    <location>
        <begin position="1"/>
        <end position="833"/>
    </location>
</feature>
<feature type="region of interest" description="Disordered" evidence="2">
    <location>
        <begin position="1"/>
        <end position="40"/>
    </location>
</feature>
<feature type="region of interest" description="Disordered" evidence="2">
    <location>
        <begin position="760"/>
        <end position="791"/>
    </location>
</feature>
<feature type="coiled-coil region" evidence="1">
    <location>
        <begin position="5"/>
        <end position="52"/>
    </location>
</feature>
<feature type="compositionally biased region" description="Basic and acidic residues" evidence="2">
    <location>
        <begin position="1"/>
        <end position="13"/>
    </location>
</feature>
<feature type="compositionally biased region" description="Gly residues" evidence="2">
    <location>
        <begin position="760"/>
        <end position="776"/>
    </location>
</feature>
<evidence type="ECO:0000255" key="1"/>
<evidence type="ECO:0000256" key="2">
    <source>
        <dbReference type="SAM" id="MobiDB-lite"/>
    </source>
</evidence>
<evidence type="ECO:0000269" key="3">
    <source>
    </source>
</evidence>
<evidence type="ECO:0000269" key="4">
    <source>
    </source>
</evidence>
<evidence type="ECO:0000269" key="5">
    <source>
    </source>
</evidence>
<evidence type="ECO:0000269" key="6">
    <source>
    </source>
</evidence>
<evidence type="ECO:0000269" key="7">
    <source>
    </source>
</evidence>
<evidence type="ECO:0000269" key="8">
    <source>
    </source>
</evidence>
<evidence type="ECO:0000269" key="9">
    <source>
    </source>
</evidence>
<evidence type="ECO:0000305" key="10"/>
<reference key="1">
    <citation type="journal article" date="2004" name="Proc. Natl. Acad. Sci. U.S.A.">
        <title>The diploid genome sequence of Candida albicans.</title>
        <authorList>
            <person name="Jones T."/>
            <person name="Federspiel N.A."/>
            <person name="Chibana H."/>
            <person name="Dungan J."/>
            <person name="Kalman S."/>
            <person name="Magee B.B."/>
            <person name="Newport G."/>
            <person name="Thorstenson Y.R."/>
            <person name="Agabian N."/>
            <person name="Magee P.T."/>
            <person name="Davis R.W."/>
            <person name="Scherer S."/>
        </authorList>
    </citation>
    <scope>NUCLEOTIDE SEQUENCE [LARGE SCALE GENOMIC DNA]</scope>
    <source>
        <strain>SC5314 / ATCC MYA-2876</strain>
    </source>
</reference>
<reference key="2">
    <citation type="journal article" date="2007" name="Genome Biol.">
        <title>Assembly of the Candida albicans genome into sixteen supercontigs aligned on the eight chromosomes.</title>
        <authorList>
            <person name="van het Hoog M."/>
            <person name="Rast T.J."/>
            <person name="Martchenko M."/>
            <person name="Grindle S."/>
            <person name="Dignard D."/>
            <person name="Hogues H."/>
            <person name="Cuomo C."/>
            <person name="Berriman M."/>
            <person name="Scherer S."/>
            <person name="Magee B.B."/>
            <person name="Whiteway M."/>
            <person name="Chibana H."/>
            <person name="Nantel A."/>
            <person name="Magee P.T."/>
        </authorList>
    </citation>
    <scope>GENOME REANNOTATION</scope>
    <source>
        <strain>SC5314 / ATCC MYA-2876</strain>
    </source>
</reference>
<reference key="3">
    <citation type="journal article" date="2013" name="Genome Biol.">
        <title>Assembly of a phased diploid Candida albicans genome facilitates allele-specific measurements and provides a simple model for repeat and indel structure.</title>
        <authorList>
            <person name="Muzzey D."/>
            <person name="Schwartz K."/>
            <person name="Weissman J.S."/>
            <person name="Sherlock G."/>
        </authorList>
    </citation>
    <scope>NUCLEOTIDE SEQUENCE [LARGE SCALE GENOMIC DNA]</scope>
    <scope>GENOME REANNOTATION</scope>
    <source>
        <strain>SC5314 / ATCC MYA-2876</strain>
    </source>
</reference>
<reference key="4">
    <citation type="journal article" date="2001" name="Genetics">
        <title>A histone deacetylation inhibitor and mutant promote colony-type switching of the human pathogen Candida albicans.</title>
        <authorList>
            <person name="Klar A.J."/>
            <person name="Srikantha T."/>
            <person name="Soll D.R."/>
        </authorList>
    </citation>
    <scope>FUNCTION</scope>
</reference>
<reference key="5">
    <citation type="journal article" date="2001" name="J. Bacteriol.">
        <title>The histone deacetylase genes HDA1 and RPD3 play distinct roles in regulation of high-frequency phenotypic switching in Candida albicans.</title>
        <authorList>
            <person name="Srikantha T."/>
            <person name="Tsai L."/>
            <person name="Daniels K."/>
            <person name="Klar A.J."/>
            <person name="Soll D.R."/>
        </authorList>
    </citation>
    <scope>FUNCTION</scope>
</reference>
<reference key="6">
    <citation type="journal article" date="2003" name="J. Mol. Biol.">
        <title>Adaptation of the Efg1p morphogenetic pathway in Candida albicans by negative autoregulation and PKA-dependent repression of the EFG1 gene.</title>
        <authorList>
            <person name="Tebarth B."/>
            <person name="Doedt T."/>
            <person name="Krishnamurthy S."/>
            <person name="Weide M."/>
            <person name="Monterola F."/>
            <person name="Dominguez A."/>
            <person name="Ernst J.F."/>
        </authorList>
    </citation>
    <scope>FUNCTION</scope>
</reference>
<reference key="7">
    <citation type="journal article" date="2010" name="PLoS ONE">
        <title>HOS2 and HDA1 encode histone deacetylases with opposing roles in Candida albicans morphogenesis.</title>
        <authorList>
            <person name="Zacchi L.F."/>
            <person name="Schulz W.L."/>
            <person name="Davis D.A."/>
        </authorList>
    </citation>
    <scope>FUNCTION</scope>
</reference>
<reference key="8">
    <citation type="journal article" date="2011" name="PLoS Biol.">
        <title>Hyphal development in Candida albicans requires two temporally linked changes in promoter chromatin for initiation and maintenance.</title>
        <authorList>
            <person name="Lu Y."/>
            <person name="Su C."/>
            <person name="Wang A."/>
            <person name="Liu H."/>
        </authorList>
    </citation>
    <scope>FUNCTION</scope>
</reference>
<reference key="9">
    <citation type="journal article" date="2012" name="Cell Rep.">
        <title>Lysine deacetylases Hda1 and Rpd3 regulate Hsp90 function thereby governing fungal drug resistance.</title>
        <authorList>
            <person name="Robbins N."/>
            <person name="Leach M.D."/>
            <person name="Cowen L.E."/>
        </authorList>
    </citation>
    <scope>FUNCTION</scope>
</reference>
<reference key="10">
    <citation type="journal article" date="2012" name="PLoS Pathog.">
        <title>A GATA transcription factor recruits Hda1 in response to reduced Tor1 signaling to establish a hyphal chromatin state in Candida albicans.</title>
        <authorList>
            <person name="Lu Y."/>
            <person name="Su C."/>
            <person name="Liu H."/>
        </authorList>
    </citation>
    <scope>FUNCTION</scope>
    <scope>INTERACTION WITH BRG1</scope>
    <scope>SUBCELLULAR LOCATION</scope>
    <scope>DNA-BINDING</scope>
</reference>
<name>HDA1_CANAL</name>
<comment type="function">
    <text evidence="3 4 5 6 7 8 9">Responsible for the deacetylation of lysine residues on the N-terminal part of the core histones (H2A, H2B, H3 and H4). Histone deacetylation gives a tag for epigenetic repression and plays an important role in transcriptional regulation, cell cycle progression and developmental events. Histone deacetylases act via the formation of large multiprotein complexes. Deacetylates the YNG2 subunit of NuA4 histone acetyltransferase (HAT) module, leading to the reduction of YNG2 and NuA4 HAT at the promoters of hypha-specific genes. Plays a key role in the regulation of filamentous growth and virulence. Involved in the switch between two heritable states, the white and opaque states. These two cell types differ in many characteristics, including cell structure, mating competence, and virulence. Each state is heritable for many generations, and switching between states occurs stochastically at low frequency.</text>
</comment>
<comment type="catalytic activity">
    <reaction>
        <text>N(6)-acetyl-L-lysyl-[histone] + H2O = L-lysyl-[histone] + acetate</text>
        <dbReference type="Rhea" id="RHEA:58196"/>
        <dbReference type="Rhea" id="RHEA-COMP:9845"/>
        <dbReference type="Rhea" id="RHEA-COMP:11338"/>
        <dbReference type="ChEBI" id="CHEBI:15377"/>
        <dbReference type="ChEBI" id="CHEBI:29969"/>
        <dbReference type="ChEBI" id="CHEBI:30089"/>
        <dbReference type="ChEBI" id="CHEBI:61930"/>
        <dbReference type="EC" id="3.5.1.98"/>
    </reaction>
</comment>
<comment type="subunit">
    <text evidence="8">Interacts with BRG1.</text>
</comment>
<comment type="subcellular location">
    <subcellularLocation>
        <location evidence="8">Nucleus</location>
    </subcellularLocation>
    <text>Recruited to promoters of hypha-specific genes by BRG1 in a rapamycin-dependent manner.</text>
</comment>
<comment type="similarity">
    <text evidence="10">Belongs to the histone deacetylase family. HD type 2 subfamily.</text>
</comment>
<dbReference type="EC" id="3.5.1.98"/>
<dbReference type="EMBL" id="CP017630">
    <property type="protein sequence ID" value="AOW30956.1"/>
    <property type="molecule type" value="Genomic_DNA"/>
</dbReference>
<dbReference type="RefSeq" id="XP_718271.1">
    <property type="nucleotide sequence ID" value="XM_713178.1"/>
</dbReference>
<dbReference type="SMR" id="Q5A960"/>
<dbReference type="FunCoup" id="Q5A960">
    <property type="interactions" value="176"/>
</dbReference>
<dbReference type="STRING" id="237561.Q5A960"/>
<dbReference type="ESTHER" id="canal-hda1">
    <property type="family name" value="Arb2_domain"/>
</dbReference>
<dbReference type="EnsemblFungi" id="CR_02050C_A-T">
    <property type="protein sequence ID" value="CR_02050C_A-T-p1"/>
    <property type="gene ID" value="CR_02050C_A"/>
</dbReference>
<dbReference type="GeneID" id="3640154"/>
<dbReference type="KEGG" id="cal:CAALFM_CR02050CA"/>
<dbReference type="CGD" id="CAL0000201463">
    <property type="gene designation" value="HDA1"/>
</dbReference>
<dbReference type="VEuPathDB" id="FungiDB:CR_02050C_A"/>
<dbReference type="eggNOG" id="KOG1343">
    <property type="taxonomic scope" value="Eukaryota"/>
</dbReference>
<dbReference type="HOGENOM" id="CLU_007727_4_0_1"/>
<dbReference type="InParanoid" id="Q5A960"/>
<dbReference type="OrthoDB" id="424012at2759"/>
<dbReference type="PRO" id="PR:Q5A960"/>
<dbReference type="Proteomes" id="UP000000559">
    <property type="component" value="Chromosome R"/>
</dbReference>
<dbReference type="GO" id="GO:0000791">
    <property type="term" value="C:euchromatin"/>
    <property type="evidence" value="ECO:0007669"/>
    <property type="project" value="EnsemblFungi"/>
</dbReference>
<dbReference type="GO" id="GO:0070823">
    <property type="term" value="C:HDA1 complex"/>
    <property type="evidence" value="ECO:0007669"/>
    <property type="project" value="EnsemblFungi"/>
</dbReference>
<dbReference type="GO" id="GO:1990342">
    <property type="term" value="C:heterochromatin island"/>
    <property type="evidence" value="ECO:0007669"/>
    <property type="project" value="EnsemblFungi"/>
</dbReference>
<dbReference type="GO" id="GO:0000118">
    <property type="term" value="C:histone deacetylase complex"/>
    <property type="evidence" value="ECO:0000318"/>
    <property type="project" value="GO_Central"/>
</dbReference>
<dbReference type="GO" id="GO:0031934">
    <property type="term" value="C:mating-type region heterochromatin"/>
    <property type="evidence" value="ECO:0007669"/>
    <property type="project" value="EnsemblFungi"/>
</dbReference>
<dbReference type="GO" id="GO:0005730">
    <property type="term" value="C:nucleolus"/>
    <property type="evidence" value="ECO:0007669"/>
    <property type="project" value="EnsemblFungi"/>
</dbReference>
<dbReference type="GO" id="GO:0005721">
    <property type="term" value="C:pericentric heterochromatin"/>
    <property type="evidence" value="ECO:0007669"/>
    <property type="project" value="EnsemblFungi"/>
</dbReference>
<dbReference type="GO" id="GO:0033553">
    <property type="term" value="C:rDNA heterochromatin"/>
    <property type="evidence" value="ECO:0007669"/>
    <property type="project" value="EnsemblFungi"/>
</dbReference>
<dbReference type="GO" id="GO:0070824">
    <property type="term" value="C:SHREC complex"/>
    <property type="evidence" value="ECO:0007669"/>
    <property type="project" value="EnsemblFungi"/>
</dbReference>
<dbReference type="GO" id="GO:0140720">
    <property type="term" value="C:subtelomeric heterochromatin"/>
    <property type="evidence" value="ECO:0007669"/>
    <property type="project" value="EnsemblFungi"/>
</dbReference>
<dbReference type="GO" id="GO:0003682">
    <property type="term" value="F:chromatin binding"/>
    <property type="evidence" value="ECO:0007669"/>
    <property type="project" value="EnsemblFungi"/>
</dbReference>
<dbReference type="GO" id="GO:0004407">
    <property type="term" value="F:histone deacetylase activity"/>
    <property type="evidence" value="ECO:0000318"/>
    <property type="project" value="GO_Central"/>
</dbReference>
<dbReference type="GO" id="GO:0031078">
    <property type="term" value="F:histone H3K14 deacetylase activity, hydrolytic mechanism"/>
    <property type="evidence" value="ECO:0007669"/>
    <property type="project" value="EnsemblFungi"/>
</dbReference>
<dbReference type="GO" id="GO:0042802">
    <property type="term" value="F:identical protein binding"/>
    <property type="evidence" value="ECO:0007669"/>
    <property type="project" value="EnsemblFungi"/>
</dbReference>
<dbReference type="GO" id="GO:0071469">
    <property type="term" value="P:cellular response to alkaline pH"/>
    <property type="evidence" value="ECO:0000315"/>
    <property type="project" value="CGD"/>
</dbReference>
<dbReference type="GO" id="GO:0009267">
    <property type="term" value="P:cellular response to starvation"/>
    <property type="evidence" value="ECO:0000315"/>
    <property type="project" value="CGD"/>
</dbReference>
<dbReference type="GO" id="GO:0040029">
    <property type="term" value="P:epigenetic regulation of gene expression"/>
    <property type="evidence" value="ECO:0000318"/>
    <property type="project" value="GO_Central"/>
</dbReference>
<dbReference type="GO" id="GO:0030447">
    <property type="term" value="P:filamentous growth"/>
    <property type="evidence" value="ECO:0000315"/>
    <property type="project" value="CGD"/>
</dbReference>
<dbReference type="GO" id="GO:0036180">
    <property type="term" value="P:filamentous growth of a population of unicellular organisms in response to biotic stimulus"/>
    <property type="evidence" value="ECO:0000315"/>
    <property type="project" value="CGD"/>
</dbReference>
<dbReference type="GO" id="GO:0036177">
    <property type="term" value="P:filamentous growth of a population of unicellular organisms in response to pH"/>
    <property type="evidence" value="ECO:0000315"/>
    <property type="project" value="CGD"/>
</dbReference>
<dbReference type="GO" id="GO:0036170">
    <property type="term" value="P:filamentous growth of a population of unicellular organisms in response to starvation"/>
    <property type="evidence" value="ECO:0000315"/>
    <property type="project" value="CGD"/>
</dbReference>
<dbReference type="GO" id="GO:0000122">
    <property type="term" value="P:negative regulation of transcription by RNA polymerase II"/>
    <property type="evidence" value="ECO:0007669"/>
    <property type="project" value="EnsemblFungi"/>
</dbReference>
<dbReference type="GO" id="GO:0010621">
    <property type="term" value="P:negative regulation of transcription by transcription factor localization"/>
    <property type="evidence" value="ECO:0007669"/>
    <property type="project" value="EnsemblFungi"/>
</dbReference>
<dbReference type="GO" id="GO:0031508">
    <property type="term" value="P:pericentric heterochromatin formation"/>
    <property type="evidence" value="ECO:0007669"/>
    <property type="project" value="EnsemblFungi"/>
</dbReference>
<dbReference type="GO" id="GO:0036166">
    <property type="term" value="P:phenotypic switching"/>
    <property type="evidence" value="ECO:0000315"/>
    <property type="project" value="CGD"/>
</dbReference>
<dbReference type="GO" id="GO:1900445">
    <property type="term" value="P:positive regulation of filamentous growth of a population of unicellular organisms in response to biotic stimulus"/>
    <property type="evidence" value="ECO:0000315"/>
    <property type="project" value="CGD"/>
</dbReference>
<dbReference type="GO" id="GO:1900743">
    <property type="term" value="P:positive regulation of filamentous growth of a population of unicellular organisms in response to pH"/>
    <property type="evidence" value="ECO:0000315"/>
    <property type="project" value="CGD"/>
</dbReference>
<dbReference type="GO" id="GO:1900436">
    <property type="term" value="P:positive regulation of filamentous growth of a population of unicellular organisms in response to starvation"/>
    <property type="evidence" value="ECO:0000315"/>
    <property type="project" value="CGD"/>
</dbReference>
<dbReference type="GO" id="GO:0045944">
    <property type="term" value="P:positive regulation of transcription by RNA polymerase II"/>
    <property type="evidence" value="ECO:0007669"/>
    <property type="project" value="EnsemblFungi"/>
</dbReference>
<dbReference type="GO" id="GO:0000183">
    <property type="term" value="P:rDNA heterochromatin formation"/>
    <property type="evidence" value="ECO:0007669"/>
    <property type="project" value="EnsemblFungi"/>
</dbReference>
<dbReference type="GO" id="GO:1900239">
    <property type="term" value="P:regulation of phenotypic switching"/>
    <property type="evidence" value="ECO:0000315"/>
    <property type="project" value="CGD"/>
</dbReference>
<dbReference type="GO" id="GO:0006357">
    <property type="term" value="P:regulation of transcription by RNA polymerase II"/>
    <property type="evidence" value="ECO:0000315"/>
    <property type="project" value="CGD"/>
</dbReference>
<dbReference type="GO" id="GO:0030466">
    <property type="term" value="P:silent mating-type cassette heterochromatin formation"/>
    <property type="evidence" value="ECO:0007669"/>
    <property type="project" value="EnsemblFungi"/>
</dbReference>
<dbReference type="GO" id="GO:1902794">
    <property type="term" value="P:siRNA-independent facultative heterochromatin formation"/>
    <property type="evidence" value="ECO:0007669"/>
    <property type="project" value="EnsemblFungi"/>
</dbReference>
<dbReference type="GO" id="GO:0031509">
    <property type="term" value="P:subtelomeric heterochromatin formation"/>
    <property type="evidence" value="ECO:0007669"/>
    <property type="project" value="EnsemblFungi"/>
</dbReference>
<dbReference type="FunFam" id="3.40.800.20:FF:000005">
    <property type="entry name" value="histone deacetylase 6"/>
    <property type="match status" value="1"/>
</dbReference>
<dbReference type="Gene3D" id="3.40.800.20">
    <property type="entry name" value="Histone deacetylase domain"/>
    <property type="match status" value="1"/>
</dbReference>
<dbReference type="InterPro" id="IPR019154">
    <property type="entry name" value="Arb2-like_domain"/>
</dbReference>
<dbReference type="InterPro" id="IPR050284">
    <property type="entry name" value="HDAC_PDAC"/>
</dbReference>
<dbReference type="InterPro" id="IPR000286">
    <property type="entry name" value="His_deacetylse"/>
</dbReference>
<dbReference type="InterPro" id="IPR023801">
    <property type="entry name" value="His_deacetylse_dom"/>
</dbReference>
<dbReference type="InterPro" id="IPR037138">
    <property type="entry name" value="His_deacetylse_dom_sf"/>
</dbReference>
<dbReference type="InterPro" id="IPR017321">
    <property type="entry name" value="Hist_deAcase_II_yeast"/>
</dbReference>
<dbReference type="InterPro" id="IPR023696">
    <property type="entry name" value="Ureohydrolase_dom_sf"/>
</dbReference>
<dbReference type="PANTHER" id="PTHR10625:SF5">
    <property type="entry name" value="HISTONE DEACETYLASE"/>
    <property type="match status" value="1"/>
</dbReference>
<dbReference type="PANTHER" id="PTHR10625">
    <property type="entry name" value="HISTONE DEACETYLASE HDAC1-RELATED"/>
    <property type="match status" value="1"/>
</dbReference>
<dbReference type="Pfam" id="PF09757">
    <property type="entry name" value="Arb2-like"/>
    <property type="match status" value="2"/>
</dbReference>
<dbReference type="Pfam" id="PF00850">
    <property type="entry name" value="Hist_deacetyl"/>
    <property type="match status" value="1"/>
</dbReference>
<dbReference type="PIRSF" id="PIRSF037919">
    <property type="entry name" value="HDAC_II_yeast"/>
    <property type="match status" value="1"/>
</dbReference>
<dbReference type="PRINTS" id="PR01270">
    <property type="entry name" value="HDASUPER"/>
</dbReference>
<dbReference type="SUPFAM" id="SSF52768">
    <property type="entry name" value="Arginase/deacetylase"/>
    <property type="match status" value="1"/>
</dbReference>
<sequence>MSTGQEEHLDSKLENQISEEENQSQNQNFPTAIEDSIQASIEKLDEVDDEINPIEVKDEFPTTIGTTYDILHPREPFPKRIKLEETETEPDSNGIADNDQTMVVVPPKKPQLFYTPLKTGLVYDVRMRYHAKVFTSYSEYIDPHPEDPRRIYRIYKKLVEAGIVLDPSLAGINEIGPFMLKIPIREATSEEILQVHSEDHLKFIQSTEDMSRDQLLKETETGDSIYVNNDSYLSAKLSCGGTIEACKAVIEGRVKNSLAIVRPPGHHAEPNTPAGFCLFSNVAVAAKNMLKNYPESVRRIVIVDWDIHHGNGTQKAFYNDPRVLYISLHRFENGKFYPGTKYGDLNQVGEGPGEGFTINIPWRSSGMHDGDYVYAFNKIIQPVISEFDPDLIIVSSGFDAADGDVIGACHVTPAGYGYMTHTLKGIARGKLAVILEGGYNLDSISKSALAVAKVLVGEPPENTITLRPQAEAIEVVDEVIKIQSKYFKSLRNGIPNGIFEDVYDLADVEKSNYKLVNIADPIRSHQVEKLFNEKEFINIPIISSPSNGEKPPFTTDLPDQLEDLIVASPDIYNCTTIILTIHDPPEIWANINPTNGVIETNSTMVLEHPLVQIMDKIQKEKDPENQEKFGYLDINIPSFQLPIPGTTSESSTYNPIIFAQEVLLYIWDNYIAYFQQLKNLVMVGFGDSYQSIVNLYGKRPSNEIKDLIKGTVAFLNRTTLKPLIPVMDESMVDWYYQNSIIFTSNFNTCWTGGSGAGNGNGNGNGNNGNSSNGGGNKSADSNGHDDFSKRPRKKFGRVIKAKTDGLCDVIQEKFDEGVDFILDSIEDYSSSED</sequence>
<proteinExistence type="evidence at protein level"/>